<evidence type="ECO:0000255" key="1">
    <source>
        <dbReference type="HAMAP-Rule" id="MF_01322"/>
    </source>
</evidence>
<sequence>MIDVNNFEYMKIGLASPDKIRSWSYGEVKKPETINYRTLKPEKDGLFCERIFGPQKDWECHCGKYKRVRYKGVVCDRCGVEVTRAKVRRERMGHIELAAPVSHIWYFKGIPSRMGLVLDMSPRALEEVIYFASYVVTESGDTPLDKKQLLSEKEYRAYRDRYGSTFHAAMGAEAIKKLLQDIDLDKEVDFLKEELKTAQGQRRTRAIKRLEVLEAFRNSGNHPSWMILEVLPVIPPELRPMVQLDGGRFATSDLNDLYRRVINRNNRLKRLLDLGAPSIIVQNEKRMLQEAVDALIDNGRRGRPVTGPGNRPLKSLSHMLKGKQGRFRQNLLGKRVDYSGRSVIVVGPNLKMYQCGLPKEMALELFKPFVMKELVGKGLAHNIKSAKRKIERVHPEVWDVLESVIKEHPVLLNRAPTLHRLGIQAFEPTLVEGRAIRLHPLVCTAYNADFDGDQMAVHVPLSSEAQAEARILMLAAQNILNPKDGKPVVTPSQDMVLGNYYLTLEREGAIGEGMVFKDANEAILAYQNGYVHLHTRVAVAASSVNNVTFTEEQKSKLLLTTVGKLIFNEILPESFPYINEPTNSNLEKETPAEYFVEKGANIKEIIASREEVAPFSKKILGNIIAEVFKRFQITETSRMLDRMKNLGFKYSTKAGITVGVSDILVLGEKDEILHEAQAKVDNVIKQFRRGLITEEERYDRVISIWSNAKDVIQGKLMKSLNKRNPIFMMSDSGARGNASNFTQLAGMRGLMANPSGRIIELPIKSSFREGLTVLEYFISTHGARKGLADTALKTADSGYLTRRLVDVAQDVIVRQDDCGTDRGLLIGAIKEGNEVIESLYDRLVGRFARKTVKHPETGEVLVVENQLITEDIAHIVEKSGVETVNIRSAFTCNTRHGVCKKCYGRNLATGTDVEVGEAVGIIAAQSIGEPGTQLTMRTFHTGGVAGDDITQGLPRIQEIFEARNPKGQAVISEIDGVIAAINDVKDRQEVVVQGEVEARTYAIPYGARLKVTLGQPISHGKELTEGSIDPKELLKVTDITAVQEYLLREVQKVYRMQGVEIGDKHVEVMVRQMLRKVRVSDAGETDVLPGTLLDIHQFTDANAKVLLKGKQPATARPVLLGITKASLETDSFLSAASFQETTRVLTDAAIKGKRDELLGLKENVIIGKLVPAGTGMNRYRKVDLVKTTQDNMNVENDEVYVEQ</sequence>
<accession>A9VP70</accession>
<keyword id="KW-0240">DNA-directed RNA polymerase</keyword>
<keyword id="KW-0460">Magnesium</keyword>
<keyword id="KW-0479">Metal-binding</keyword>
<keyword id="KW-0548">Nucleotidyltransferase</keyword>
<keyword id="KW-0804">Transcription</keyword>
<keyword id="KW-0808">Transferase</keyword>
<keyword id="KW-0862">Zinc</keyword>
<organism>
    <name type="scientific">Bacillus mycoides (strain KBAB4)</name>
    <name type="common">Bacillus weihenstephanensis</name>
    <dbReference type="NCBI Taxonomy" id="315730"/>
    <lineage>
        <taxon>Bacteria</taxon>
        <taxon>Bacillati</taxon>
        <taxon>Bacillota</taxon>
        <taxon>Bacilli</taxon>
        <taxon>Bacillales</taxon>
        <taxon>Bacillaceae</taxon>
        <taxon>Bacillus</taxon>
        <taxon>Bacillus cereus group</taxon>
    </lineage>
</organism>
<protein>
    <recommendedName>
        <fullName evidence="1">DNA-directed RNA polymerase subunit beta'</fullName>
        <shortName evidence="1">RNAP subunit beta'</shortName>
        <ecNumber evidence="1">2.7.7.6</ecNumber>
    </recommendedName>
    <alternativeName>
        <fullName evidence="1">RNA polymerase subunit beta'</fullName>
    </alternativeName>
    <alternativeName>
        <fullName evidence="1">Transcriptase subunit beta'</fullName>
    </alternativeName>
</protein>
<comment type="function">
    <text evidence="1">DNA-dependent RNA polymerase catalyzes the transcription of DNA into RNA using the four ribonucleoside triphosphates as substrates.</text>
</comment>
<comment type="catalytic activity">
    <reaction evidence="1">
        <text>RNA(n) + a ribonucleoside 5'-triphosphate = RNA(n+1) + diphosphate</text>
        <dbReference type="Rhea" id="RHEA:21248"/>
        <dbReference type="Rhea" id="RHEA-COMP:14527"/>
        <dbReference type="Rhea" id="RHEA-COMP:17342"/>
        <dbReference type="ChEBI" id="CHEBI:33019"/>
        <dbReference type="ChEBI" id="CHEBI:61557"/>
        <dbReference type="ChEBI" id="CHEBI:140395"/>
        <dbReference type="EC" id="2.7.7.6"/>
    </reaction>
</comment>
<comment type="cofactor">
    <cofactor evidence="1">
        <name>Mg(2+)</name>
        <dbReference type="ChEBI" id="CHEBI:18420"/>
    </cofactor>
    <text evidence="1">Binds 1 Mg(2+) ion per subunit.</text>
</comment>
<comment type="cofactor">
    <cofactor evidence="1">
        <name>Zn(2+)</name>
        <dbReference type="ChEBI" id="CHEBI:29105"/>
    </cofactor>
    <text evidence="1">Binds 2 Zn(2+) ions per subunit.</text>
</comment>
<comment type="subunit">
    <text evidence="1">The RNAP catalytic core consists of 2 alpha, 1 beta, 1 beta' and 1 omega subunit. When a sigma factor is associated with the core the holoenzyme is formed, which can initiate transcription.</text>
</comment>
<comment type="similarity">
    <text evidence="1">Belongs to the RNA polymerase beta' chain family.</text>
</comment>
<reference key="1">
    <citation type="journal article" date="2008" name="Chem. Biol. Interact.">
        <title>Extending the Bacillus cereus group genomics to putative food-borne pathogens of different toxicity.</title>
        <authorList>
            <person name="Lapidus A."/>
            <person name="Goltsman E."/>
            <person name="Auger S."/>
            <person name="Galleron N."/>
            <person name="Segurens B."/>
            <person name="Dossat C."/>
            <person name="Land M.L."/>
            <person name="Broussolle V."/>
            <person name="Brillard J."/>
            <person name="Guinebretiere M.-H."/>
            <person name="Sanchis V."/>
            <person name="Nguen-the C."/>
            <person name="Lereclus D."/>
            <person name="Richardson P."/>
            <person name="Wincker P."/>
            <person name="Weissenbach J."/>
            <person name="Ehrlich S.D."/>
            <person name="Sorokin A."/>
        </authorList>
    </citation>
    <scope>NUCLEOTIDE SEQUENCE [LARGE SCALE GENOMIC DNA]</scope>
    <source>
        <strain>KBAB4</strain>
    </source>
</reference>
<name>RPOC_BACMK</name>
<gene>
    <name evidence="1" type="primary">rpoC</name>
    <name type="ordered locus">BcerKBAB4_0098</name>
</gene>
<feature type="chain" id="PRO_0000353295" description="DNA-directed RNA polymerase subunit beta'">
    <location>
        <begin position="1"/>
        <end position="1203"/>
    </location>
</feature>
<feature type="binding site" evidence="1">
    <location>
        <position position="60"/>
    </location>
    <ligand>
        <name>Zn(2+)</name>
        <dbReference type="ChEBI" id="CHEBI:29105"/>
        <label>1</label>
    </ligand>
</feature>
<feature type="binding site" evidence="1">
    <location>
        <position position="62"/>
    </location>
    <ligand>
        <name>Zn(2+)</name>
        <dbReference type="ChEBI" id="CHEBI:29105"/>
        <label>1</label>
    </ligand>
</feature>
<feature type="binding site" evidence="1">
    <location>
        <position position="75"/>
    </location>
    <ligand>
        <name>Zn(2+)</name>
        <dbReference type="ChEBI" id="CHEBI:29105"/>
        <label>1</label>
    </ligand>
</feature>
<feature type="binding site" evidence="1">
    <location>
        <position position="78"/>
    </location>
    <ligand>
        <name>Zn(2+)</name>
        <dbReference type="ChEBI" id="CHEBI:29105"/>
        <label>1</label>
    </ligand>
</feature>
<feature type="binding site" evidence="1">
    <location>
        <position position="449"/>
    </location>
    <ligand>
        <name>Mg(2+)</name>
        <dbReference type="ChEBI" id="CHEBI:18420"/>
    </ligand>
</feature>
<feature type="binding site" evidence="1">
    <location>
        <position position="451"/>
    </location>
    <ligand>
        <name>Mg(2+)</name>
        <dbReference type="ChEBI" id="CHEBI:18420"/>
    </ligand>
</feature>
<feature type="binding site" evidence="1">
    <location>
        <position position="453"/>
    </location>
    <ligand>
        <name>Mg(2+)</name>
        <dbReference type="ChEBI" id="CHEBI:18420"/>
    </ligand>
</feature>
<feature type="binding site" evidence="1">
    <location>
        <position position="818"/>
    </location>
    <ligand>
        <name>Zn(2+)</name>
        <dbReference type="ChEBI" id="CHEBI:29105"/>
        <label>2</label>
    </ligand>
</feature>
<feature type="binding site" evidence="1">
    <location>
        <position position="892"/>
    </location>
    <ligand>
        <name>Zn(2+)</name>
        <dbReference type="ChEBI" id="CHEBI:29105"/>
        <label>2</label>
    </ligand>
</feature>
<feature type="binding site" evidence="1">
    <location>
        <position position="899"/>
    </location>
    <ligand>
        <name>Zn(2+)</name>
        <dbReference type="ChEBI" id="CHEBI:29105"/>
        <label>2</label>
    </ligand>
</feature>
<feature type="binding site" evidence="1">
    <location>
        <position position="902"/>
    </location>
    <ligand>
        <name>Zn(2+)</name>
        <dbReference type="ChEBI" id="CHEBI:29105"/>
        <label>2</label>
    </ligand>
</feature>
<proteinExistence type="inferred from homology"/>
<dbReference type="EC" id="2.7.7.6" evidence="1"/>
<dbReference type="EMBL" id="CP000903">
    <property type="protein sequence ID" value="ABY41367.1"/>
    <property type="molecule type" value="Genomic_DNA"/>
</dbReference>
<dbReference type="RefSeq" id="WP_002009783.1">
    <property type="nucleotide sequence ID" value="NC_010184.1"/>
</dbReference>
<dbReference type="SMR" id="A9VP70"/>
<dbReference type="GeneID" id="66264828"/>
<dbReference type="KEGG" id="bwe:BcerKBAB4_0098"/>
<dbReference type="eggNOG" id="COG0086">
    <property type="taxonomic scope" value="Bacteria"/>
</dbReference>
<dbReference type="HOGENOM" id="CLU_000524_3_1_9"/>
<dbReference type="Proteomes" id="UP000002154">
    <property type="component" value="Chromosome"/>
</dbReference>
<dbReference type="GO" id="GO:0000428">
    <property type="term" value="C:DNA-directed RNA polymerase complex"/>
    <property type="evidence" value="ECO:0007669"/>
    <property type="project" value="UniProtKB-KW"/>
</dbReference>
<dbReference type="GO" id="GO:0003677">
    <property type="term" value="F:DNA binding"/>
    <property type="evidence" value="ECO:0007669"/>
    <property type="project" value="UniProtKB-UniRule"/>
</dbReference>
<dbReference type="GO" id="GO:0003899">
    <property type="term" value="F:DNA-directed RNA polymerase activity"/>
    <property type="evidence" value="ECO:0007669"/>
    <property type="project" value="UniProtKB-UniRule"/>
</dbReference>
<dbReference type="GO" id="GO:0000287">
    <property type="term" value="F:magnesium ion binding"/>
    <property type="evidence" value="ECO:0007669"/>
    <property type="project" value="UniProtKB-UniRule"/>
</dbReference>
<dbReference type="GO" id="GO:0008270">
    <property type="term" value="F:zinc ion binding"/>
    <property type="evidence" value="ECO:0007669"/>
    <property type="project" value="UniProtKB-UniRule"/>
</dbReference>
<dbReference type="GO" id="GO:0006351">
    <property type="term" value="P:DNA-templated transcription"/>
    <property type="evidence" value="ECO:0007669"/>
    <property type="project" value="UniProtKB-UniRule"/>
</dbReference>
<dbReference type="CDD" id="cd02655">
    <property type="entry name" value="RNAP_beta'_C"/>
    <property type="match status" value="1"/>
</dbReference>
<dbReference type="CDD" id="cd01609">
    <property type="entry name" value="RNAP_beta'_N"/>
    <property type="match status" value="1"/>
</dbReference>
<dbReference type="FunFam" id="1.10.150.390:FF:000002">
    <property type="entry name" value="DNA-directed RNA polymerase subunit beta"/>
    <property type="match status" value="1"/>
</dbReference>
<dbReference type="FunFam" id="4.10.860.120:FF:000001">
    <property type="entry name" value="DNA-directed RNA polymerase subunit beta"/>
    <property type="match status" value="1"/>
</dbReference>
<dbReference type="Gene3D" id="1.10.132.30">
    <property type="match status" value="1"/>
</dbReference>
<dbReference type="Gene3D" id="1.10.150.390">
    <property type="match status" value="1"/>
</dbReference>
<dbReference type="Gene3D" id="1.10.1790.20">
    <property type="match status" value="1"/>
</dbReference>
<dbReference type="Gene3D" id="1.10.40.90">
    <property type="match status" value="1"/>
</dbReference>
<dbReference type="Gene3D" id="2.40.40.20">
    <property type="match status" value="1"/>
</dbReference>
<dbReference type="Gene3D" id="2.40.50.100">
    <property type="match status" value="1"/>
</dbReference>
<dbReference type="Gene3D" id="4.10.860.120">
    <property type="entry name" value="RNA polymerase II, clamp domain"/>
    <property type="match status" value="1"/>
</dbReference>
<dbReference type="Gene3D" id="1.10.274.100">
    <property type="entry name" value="RNA polymerase Rpb1, domain 3"/>
    <property type="match status" value="1"/>
</dbReference>
<dbReference type="HAMAP" id="MF_01322">
    <property type="entry name" value="RNApol_bact_RpoC"/>
    <property type="match status" value="1"/>
</dbReference>
<dbReference type="InterPro" id="IPR045867">
    <property type="entry name" value="DNA-dir_RpoC_beta_prime"/>
</dbReference>
<dbReference type="InterPro" id="IPR012754">
    <property type="entry name" value="DNA-dir_RpoC_beta_prime_bact"/>
</dbReference>
<dbReference type="InterPro" id="IPR000722">
    <property type="entry name" value="RNA_pol_asu"/>
</dbReference>
<dbReference type="InterPro" id="IPR006592">
    <property type="entry name" value="RNA_pol_N"/>
</dbReference>
<dbReference type="InterPro" id="IPR007080">
    <property type="entry name" value="RNA_pol_Rpb1_1"/>
</dbReference>
<dbReference type="InterPro" id="IPR007066">
    <property type="entry name" value="RNA_pol_Rpb1_3"/>
</dbReference>
<dbReference type="InterPro" id="IPR042102">
    <property type="entry name" value="RNA_pol_Rpb1_3_sf"/>
</dbReference>
<dbReference type="InterPro" id="IPR007083">
    <property type="entry name" value="RNA_pol_Rpb1_4"/>
</dbReference>
<dbReference type="InterPro" id="IPR007081">
    <property type="entry name" value="RNA_pol_Rpb1_5"/>
</dbReference>
<dbReference type="InterPro" id="IPR044893">
    <property type="entry name" value="RNA_pol_Rpb1_clamp_domain"/>
</dbReference>
<dbReference type="InterPro" id="IPR038120">
    <property type="entry name" value="Rpb1_funnel_sf"/>
</dbReference>
<dbReference type="NCBIfam" id="TIGR02386">
    <property type="entry name" value="rpoC_TIGR"/>
    <property type="match status" value="1"/>
</dbReference>
<dbReference type="PANTHER" id="PTHR19376">
    <property type="entry name" value="DNA-DIRECTED RNA POLYMERASE"/>
    <property type="match status" value="1"/>
</dbReference>
<dbReference type="PANTHER" id="PTHR19376:SF54">
    <property type="entry name" value="DNA-DIRECTED RNA POLYMERASE SUBUNIT BETA"/>
    <property type="match status" value="1"/>
</dbReference>
<dbReference type="Pfam" id="PF04997">
    <property type="entry name" value="RNA_pol_Rpb1_1"/>
    <property type="match status" value="1"/>
</dbReference>
<dbReference type="Pfam" id="PF00623">
    <property type="entry name" value="RNA_pol_Rpb1_2"/>
    <property type="match status" value="1"/>
</dbReference>
<dbReference type="Pfam" id="PF04983">
    <property type="entry name" value="RNA_pol_Rpb1_3"/>
    <property type="match status" value="1"/>
</dbReference>
<dbReference type="Pfam" id="PF05000">
    <property type="entry name" value="RNA_pol_Rpb1_4"/>
    <property type="match status" value="1"/>
</dbReference>
<dbReference type="Pfam" id="PF04998">
    <property type="entry name" value="RNA_pol_Rpb1_5"/>
    <property type="match status" value="2"/>
</dbReference>
<dbReference type="SMART" id="SM00663">
    <property type="entry name" value="RPOLA_N"/>
    <property type="match status" value="1"/>
</dbReference>
<dbReference type="SUPFAM" id="SSF64484">
    <property type="entry name" value="beta and beta-prime subunits of DNA dependent RNA-polymerase"/>
    <property type="match status" value="1"/>
</dbReference>